<feature type="chain" id="PRO_0000327617" description="DNA replication complex GINS protein PSF3">
    <location>
        <begin position="1"/>
        <end position="216"/>
    </location>
</feature>
<feature type="region of interest" description="Not essential for folding and stability of GINS complex, but may regulate accessibility to the central complex pore" evidence="1">
    <location>
        <begin position="1"/>
        <end position="16"/>
    </location>
</feature>
<keyword id="KW-0158">Chromosome</keyword>
<keyword id="KW-0235">DNA replication</keyword>
<keyword id="KW-0539">Nucleus</keyword>
<keyword id="KW-1185">Reference proteome</keyword>
<protein>
    <recommendedName>
        <fullName>DNA replication complex GINS protein PSF3</fullName>
    </recommendedName>
    <alternativeName>
        <fullName>GINS complex subunit 3</fullName>
    </alternativeName>
</protein>
<organism>
    <name type="scientific">Pongo abelii</name>
    <name type="common">Sumatran orangutan</name>
    <name type="synonym">Pongo pygmaeus abelii</name>
    <dbReference type="NCBI Taxonomy" id="9601"/>
    <lineage>
        <taxon>Eukaryota</taxon>
        <taxon>Metazoa</taxon>
        <taxon>Chordata</taxon>
        <taxon>Craniata</taxon>
        <taxon>Vertebrata</taxon>
        <taxon>Euteleostomi</taxon>
        <taxon>Mammalia</taxon>
        <taxon>Eutheria</taxon>
        <taxon>Euarchontoglires</taxon>
        <taxon>Primates</taxon>
        <taxon>Haplorrhini</taxon>
        <taxon>Catarrhini</taxon>
        <taxon>Hominidae</taxon>
        <taxon>Pongo</taxon>
    </lineage>
</organism>
<accession>Q5RDV0</accession>
<evidence type="ECO:0000250" key="1"/>
<evidence type="ECO:0000250" key="2">
    <source>
        <dbReference type="UniProtKB" id="Q9BRX5"/>
    </source>
</evidence>
<evidence type="ECO:0000305" key="3"/>
<reference key="1">
    <citation type="submission" date="2004-11" db="EMBL/GenBank/DDBJ databases">
        <authorList>
            <consortium name="The German cDNA consortium"/>
        </authorList>
    </citation>
    <scope>NUCLEOTIDE SEQUENCE [LARGE SCALE MRNA]</scope>
    <source>
        <tissue>Brain cortex</tissue>
    </source>
</reference>
<sequence>MSEAYFRVESGALGPEENFLSLDDILMSHEKLPVRTETAMPRLGAFFLERSAGAETDNAVPQGSKLELPLWLAKGLFDNKRRILSVELPKIYQEGWRTVFSADPNVVDLHKMGPHFYGFGSQLLHFDSPENADISQSLLQTFIGRFRRIMDSSQNAYNEDTSALVARLDEMERGLFQIGQNGLNDFQCWEKGQASQITASNLVQNYKKRKFTDMED</sequence>
<proteinExistence type="evidence at transcript level"/>
<gene>
    <name type="primary">GINS3</name>
    <name type="synonym">PSF3</name>
</gene>
<dbReference type="EMBL" id="CR857794">
    <property type="protein sequence ID" value="CAH90057.1"/>
    <property type="molecule type" value="mRNA"/>
</dbReference>
<dbReference type="RefSeq" id="XP_002826522.1">
    <property type="nucleotide sequence ID" value="XM_002826476.6"/>
</dbReference>
<dbReference type="SMR" id="Q5RDV0"/>
<dbReference type="FunCoup" id="Q5RDV0">
    <property type="interactions" value="2155"/>
</dbReference>
<dbReference type="STRING" id="9601.ENSPPYP00000008370"/>
<dbReference type="Ensembl" id="ENSPPYT00000060678.1">
    <property type="protein sequence ID" value="ENSPPYP00000036061.1"/>
    <property type="gene ID" value="ENSPPYG00000007407.3"/>
</dbReference>
<dbReference type="GeneID" id="100442718"/>
<dbReference type="KEGG" id="pon:100442718"/>
<dbReference type="CTD" id="64785"/>
<dbReference type="eggNOG" id="KOG1106">
    <property type="taxonomic scope" value="Eukaryota"/>
</dbReference>
<dbReference type="GeneTree" id="ENSGT00390000001622"/>
<dbReference type="HOGENOM" id="CLU_081646_2_0_1"/>
<dbReference type="InParanoid" id="Q5RDV0"/>
<dbReference type="OrthoDB" id="10251744at2759"/>
<dbReference type="TreeFam" id="TF314626"/>
<dbReference type="Proteomes" id="UP000001595">
    <property type="component" value="Chromosome 16"/>
</dbReference>
<dbReference type="GO" id="GO:0071162">
    <property type="term" value="C:CMG complex"/>
    <property type="evidence" value="ECO:0000250"/>
    <property type="project" value="UniProtKB"/>
</dbReference>
<dbReference type="GO" id="GO:0000811">
    <property type="term" value="C:GINS complex"/>
    <property type="evidence" value="ECO:0007669"/>
    <property type="project" value="TreeGrafter"/>
</dbReference>
<dbReference type="GO" id="GO:1902975">
    <property type="term" value="P:mitotic DNA replication initiation"/>
    <property type="evidence" value="ECO:0007669"/>
    <property type="project" value="TreeGrafter"/>
</dbReference>
<dbReference type="CDD" id="cd11713">
    <property type="entry name" value="GINS_A_psf3"/>
    <property type="match status" value="1"/>
</dbReference>
<dbReference type="CDD" id="cd21693">
    <property type="entry name" value="GINS_B_Psf3"/>
    <property type="match status" value="1"/>
</dbReference>
<dbReference type="FunFam" id="1.20.58.2050:FF:000001">
    <property type="entry name" value="DNA replication complex GINS protein PSF3"/>
    <property type="match status" value="1"/>
</dbReference>
<dbReference type="Gene3D" id="1.20.58.2050">
    <property type="match status" value="1"/>
</dbReference>
<dbReference type="InterPro" id="IPR021151">
    <property type="entry name" value="GINS_A"/>
</dbReference>
<dbReference type="InterPro" id="IPR036224">
    <property type="entry name" value="GINS_bundle-like_dom_sf"/>
</dbReference>
<dbReference type="InterPro" id="IPR010492">
    <property type="entry name" value="GINS_Psf3"/>
</dbReference>
<dbReference type="InterPro" id="IPR038437">
    <property type="entry name" value="GINS_Psf3_sf"/>
</dbReference>
<dbReference type="InterPro" id="IPR055221">
    <property type="entry name" value="PSF3_N"/>
</dbReference>
<dbReference type="PANTHER" id="PTHR22768">
    <property type="entry name" value="DNA REPLICATION COMPLEX GINS PROTEIN PSF3"/>
    <property type="match status" value="1"/>
</dbReference>
<dbReference type="PANTHER" id="PTHR22768:SF0">
    <property type="entry name" value="DNA REPLICATION COMPLEX GINS PROTEIN PSF3"/>
    <property type="match status" value="1"/>
</dbReference>
<dbReference type="Pfam" id="PF22466">
    <property type="entry name" value="PSF3_N"/>
    <property type="match status" value="1"/>
</dbReference>
<dbReference type="Pfam" id="PF05916">
    <property type="entry name" value="Sld5"/>
    <property type="match status" value="1"/>
</dbReference>
<dbReference type="SUPFAM" id="SSF158573">
    <property type="entry name" value="GINS helical bundle-like"/>
    <property type="match status" value="1"/>
</dbReference>
<dbReference type="SUPFAM" id="SSF160059">
    <property type="entry name" value="PriA/YqbF domain"/>
    <property type="match status" value="1"/>
</dbReference>
<comment type="function">
    <text evidence="2">Required for correct functioning of the GINS complex, a complex that plays an essential role in the initiation of DNA replication, and progression of DNA replication forks. GINS complex is a core component of CDC45-MCM-GINS (CMG) helicase, the molecular machine that unwinds template DNA during replication, and around which the replisome is built.</text>
</comment>
<comment type="subunit">
    <text evidence="2">Component of the GINS complex which is a heterotetramer of GINS1, GINS2, GINS3 and GINS4. Forms a stable subcomplex with GINS2. GINS complex interacts with DNA primase in vitro. Component of the CMG helicase complex, a hexameric ring of related MCM2-7 subunits stabilized by CDC45 and the tetrameric GINS complex.</text>
</comment>
<comment type="subcellular location">
    <subcellularLocation>
        <location evidence="2">Nucleus</location>
    </subcellularLocation>
    <subcellularLocation>
        <location evidence="2">Chromosome</location>
    </subcellularLocation>
    <text evidence="2">Associates with chromatin.</text>
</comment>
<comment type="similarity">
    <text evidence="3">Belongs to the GINS3/PSF3 family.</text>
</comment>
<name>PSF3_PONAB</name>